<accession>B7L759</accession>
<sequence length="55" mass="6372">MAKGIREKIKLVSSAGTGHFYTTTKNKRTKPEKLELKKFDPVVRQHVIYKEAKIK</sequence>
<dbReference type="EMBL" id="CU928145">
    <property type="protein sequence ID" value="CAV00639.1"/>
    <property type="molecule type" value="Genomic_DNA"/>
</dbReference>
<dbReference type="RefSeq" id="WP_001051798.1">
    <property type="nucleotide sequence ID" value="NZ_CP028304.1"/>
</dbReference>
<dbReference type="SMR" id="B7L759"/>
<dbReference type="GeneID" id="97607673"/>
<dbReference type="KEGG" id="eck:EC55989_4100"/>
<dbReference type="HOGENOM" id="CLU_190949_1_1_6"/>
<dbReference type="Proteomes" id="UP000000746">
    <property type="component" value="Chromosome"/>
</dbReference>
<dbReference type="GO" id="GO:0022625">
    <property type="term" value="C:cytosolic large ribosomal subunit"/>
    <property type="evidence" value="ECO:0007669"/>
    <property type="project" value="TreeGrafter"/>
</dbReference>
<dbReference type="GO" id="GO:0003735">
    <property type="term" value="F:structural constituent of ribosome"/>
    <property type="evidence" value="ECO:0007669"/>
    <property type="project" value="InterPro"/>
</dbReference>
<dbReference type="GO" id="GO:0006412">
    <property type="term" value="P:translation"/>
    <property type="evidence" value="ECO:0007669"/>
    <property type="project" value="UniProtKB-UniRule"/>
</dbReference>
<dbReference type="FunFam" id="2.20.28.120:FF:000001">
    <property type="entry name" value="50S ribosomal protein L33"/>
    <property type="match status" value="1"/>
</dbReference>
<dbReference type="Gene3D" id="2.20.28.120">
    <property type="entry name" value="Ribosomal protein L33"/>
    <property type="match status" value="1"/>
</dbReference>
<dbReference type="HAMAP" id="MF_00294">
    <property type="entry name" value="Ribosomal_bL33"/>
    <property type="match status" value="1"/>
</dbReference>
<dbReference type="InterPro" id="IPR001705">
    <property type="entry name" value="Ribosomal_bL33"/>
</dbReference>
<dbReference type="InterPro" id="IPR018264">
    <property type="entry name" value="Ribosomal_bL33_CS"/>
</dbReference>
<dbReference type="InterPro" id="IPR038584">
    <property type="entry name" value="Ribosomal_bL33_sf"/>
</dbReference>
<dbReference type="InterPro" id="IPR011332">
    <property type="entry name" value="Ribosomal_zn-bd"/>
</dbReference>
<dbReference type="NCBIfam" id="NF001860">
    <property type="entry name" value="PRK00595.1"/>
    <property type="match status" value="1"/>
</dbReference>
<dbReference type="NCBIfam" id="TIGR01023">
    <property type="entry name" value="rpmG_bact"/>
    <property type="match status" value="1"/>
</dbReference>
<dbReference type="PANTHER" id="PTHR15238">
    <property type="entry name" value="54S RIBOSOMAL PROTEIN L39, MITOCHONDRIAL"/>
    <property type="match status" value="1"/>
</dbReference>
<dbReference type="PANTHER" id="PTHR15238:SF1">
    <property type="entry name" value="LARGE RIBOSOMAL SUBUNIT PROTEIN BL33M"/>
    <property type="match status" value="1"/>
</dbReference>
<dbReference type="Pfam" id="PF00471">
    <property type="entry name" value="Ribosomal_L33"/>
    <property type="match status" value="1"/>
</dbReference>
<dbReference type="SUPFAM" id="SSF57829">
    <property type="entry name" value="Zn-binding ribosomal proteins"/>
    <property type="match status" value="1"/>
</dbReference>
<dbReference type="PROSITE" id="PS00582">
    <property type="entry name" value="RIBOSOMAL_L33"/>
    <property type="match status" value="1"/>
</dbReference>
<keyword id="KW-1185">Reference proteome</keyword>
<keyword id="KW-0687">Ribonucleoprotein</keyword>
<keyword id="KW-0689">Ribosomal protein</keyword>
<organism>
    <name type="scientific">Escherichia coli (strain 55989 / EAEC)</name>
    <dbReference type="NCBI Taxonomy" id="585055"/>
    <lineage>
        <taxon>Bacteria</taxon>
        <taxon>Pseudomonadati</taxon>
        <taxon>Pseudomonadota</taxon>
        <taxon>Gammaproteobacteria</taxon>
        <taxon>Enterobacterales</taxon>
        <taxon>Enterobacteriaceae</taxon>
        <taxon>Escherichia</taxon>
    </lineage>
</organism>
<protein>
    <recommendedName>
        <fullName evidence="1">Large ribosomal subunit protein bL33</fullName>
    </recommendedName>
    <alternativeName>
        <fullName evidence="2">50S ribosomal protein L33</fullName>
    </alternativeName>
</protein>
<name>RL33_ECO55</name>
<feature type="chain" id="PRO_1000194054" description="Large ribosomal subunit protein bL33">
    <location>
        <begin position="1"/>
        <end position="55"/>
    </location>
</feature>
<comment type="similarity">
    <text evidence="1">Belongs to the bacterial ribosomal protein bL33 family.</text>
</comment>
<gene>
    <name evidence="1" type="primary">rpmG</name>
    <name type="ordered locus">EC55989_4100</name>
</gene>
<reference key="1">
    <citation type="journal article" date="2009" name="PLoS Genet.">
        <title>Organised genome dynamics in the Escherichia coli species results in highly diverse adaptive paths.</title>
        <authorList>
            <person name="Touchon M."/>
            <person name="Hoede C."/>
            <person name="Tenaillon O."/>
            <person name="Barbe V."/>
            <person name="Baeriswyl S."/>
            <person name="Bidet P."/>
            <person name="Bingen E."/>
            <person name="Bonacorsi S."/>
            <person name="Bouchier C."/>
            <person name="Bouvet O."/>
            <person name="Calteau A."/>
            <person name="Chiapello H."/>
            <person name="Clermont O."/>
            <person name="Cruveiller S."/>
            <person name="Danchin A."/>
            <person name="Diard M."/>
            <person name="Dossat C."/>
            <person name="Karoui M.E."/>
            <person name="Frapy E."/>
            <person name="Garry L."/>
            <person name="Ghigo J.M."/>
            <person name="Gilles A.M."/>
            <person name="Johnson J."/>
            <person name="Le Bouguenec C."/>
            <person name="Lescat M."/>
            <person name="Mangenot S."/>
            <person name="Martinez-Jehanne V."/>
            <person name="Matic I."/>
            <person name="Nassif X."/>
            <person name="Oztas S."/>
            <person name="Petit M.A."/>
            <person name="Pichon C."/>
            <person name="Rouy Z."/>
            <person name="Ruf C.S."/>
            <person name="Schneider D."/>
            <person name="Tourret J."/>
            <person name="Vacherie B."/>
            <person name="Vallenet D."/>
            <person name="Medigue C."/>
            <person name="Rocha E.P.C."/>
            <person name="Denamur E."/>
        </authorList>
    </citation>
    <scope>NUCLEOTIDE SEQUENCE [LARGE SCALE GENOMIC DNA]</scope>
    <source>
        <strain>55989 / EAEC</strain>
    </source>
</reference>
<evidence type="ECO:0000255" key="1">
    <source>
        <dbReference type="HAMAP-Rule" id="MF_00294"/>
    </source>
</evidence>
<evidence type="ECO:0000305" key="2"/>
<proteinExistence type="inferred from homology"/>